<dbReference type="EMBL" id="AC004122">
    <property type="protein sequence ID" value="AAC34336.1"/>
    <property type="status" value="ALT_SEQ"/>
    <property type="molecule type" value="Genomic_DNA"/>
</dbReference>
<dbReference type="EMBL" id="CP002684">
    <property type="protein sequence ID" value="AEE28544.1"/>
    <property type="molecule type" value="Genomic_DNA"/>
</dbReference>
<dbReference type="EMBL" id="CP002684">
    <property type="protein sequence ID" value="ANM58801.1"/>
    <property type="molecule type" value="Genomic_DNA"/>
</dbReference>
<dbReference type="EMBL" id="BT012655">
    <property type="protein sequence ID" value="AAT06474.1"/>
    <property type="molecule type" value="mRNA"/>
</dbReference>
<dbReference type="EMBL" id="AK221806">
    <property type="protein sequence ID" value="BAD93978.1"/>
    <property type="molecule type" value="mRNA"/>
</dbReference>
<dbReference type="EMBL" id="AK229309">
    <property type="protein sequence ID" value="BAF01172.1"/>
    <property type="molecule type" value="mRNA"/>
</dbReference>
<dbReference type="EMBL" id="AK230347">
    <property type="protein sequence ID" value="BAF02146.1"/>
    <property type="molecule type" value="mRNA"/>
</dbReference>
<dbReference type="EMBL" id="AF488606">
    <property type="status" value="NOT_ANNOTATED_CDS"/>
    <property type="molecule type" value="mRNA"/>
</dbReference>
<dbReference type="PIR" id="T00632">
    <property type="entry name" value="T00632"/>
</dbReference>
<dbReference type="RefSeq" id="NP_001321212.1">
    <property type="nucleotide sequence ID" value="NM_001331887.1"/>
</dbReference>
<dbReference type="RefSeq" id="NP_172483.4">
    <property type="nucleotide sequence ID" value="NM_100886.7"/>
</dbReference>
<dbReference type="SMR" id="Q6NKN9"/>
<dbReference type="FunCoup" id="Q6NKN9">
    <property type="interactions" value="528"/>
</dbReference>
<dbReference type="IntAct" id="Q6NKN9">
    <property type="interactions" value="1"/>
</dbReference>
<dbReference type="STRING" id="3702.Q6NKN9"/>
<dbReference type="PaxDb" id="3702-AT1G10120.1"/>
<dbReference type="ProteomicsDB" id="240663"/>
<dbReference type="EnsemblPlants" id="AT1G10120.1">
    <property type="protein sequence ID" value="AT1G10120.1"/>
    <property type="gene ID" value="AT1G10120"/>
</dbReference>
<dbReference type="EnsemblPlants" id="AT1G10120.2">
    <property type="protein sequence ID" value="AT1G10120.2"/>
    <property type="gene ID" value="AT1G10120"/>
</dbReference>
<dbReference type="GeneID" id="837549"/>
<dbReference type="Gramene" id="AT1G10120.1">
    <property type="protein sequence ID" value="AT1G10120.1"/>
    <property type="gene ID" value="AT1G10120"/>
</dbReference>
<dbReference type="Gramene" id="AT1G10120.2">
    <property type="protein sequence ID" value="AT1G10120.2"/>
    <property type="gene ID" value="AT1G10120"/>
</dbReference>
<dbReference type="KEGG" id="ath:AT1G10120"/>
<dbReference type="Araport" id="AT1G10120"/>
<dbReference type="TAIR" id="AT1G10120">
    <property type="gene designation" value="CIB4"/>
</dbReference>
<dbReference type="eggNOG" id="ENOG502QRH8">
    <property type="taxonomic scope" value="Eukaryota"/>
</dbReference>
<dbReference type="HOGENOM" id="CLU_044658_0_0_1"/>
<dbReference type="InParanoid" id="Q6NKN9"/>
<dbReference type="OMA" id="SMAMDNP"/>
<dbReference type="OrthoDB" id="1609391at2759"/>
<dbReference type="PhylomeDB" id="Q6NKN9"/>
<dbReference type="PRO" id="PR:Q6NKN9"/>
<dbReference type="Proteomes" id="UP000006548">
    <property type="component" value="Chromosome 1"/>
</dbReference>
<dbReference type="ExpressionAtlas" id="Q6NKN9">
    <property type="expression patterns" value="baseline and differential"/>
</dbReference>
<dbReference type="GO" id="GO:0005634">
    <property type="term" value="C:nucleus"/>
    <property type="evidence" value="ECO:0007005"/>
    <property type="project" value="TAIR"/>
</dbReference>
<dbReference type="GO" id="GO:0003700">
    <property type="term" value="F:DNA-binding transcription factor activity"/>
    <property type="evidence" value="ECO:0000250"/>
    <property type="project" value="TAIR"/>
</dbReference>
<dbReference type="GO" id="GO:0046983">
    <property type="term" value="F:protein dimerization activity"/>
    <property type="evidence" value="ECO:0007669"/>
    <property type="project" value="InterPro"/>
</dbReference>
<dbReference type="GO" id="GO:0000976">
    <property type="term" value="F:transcription cis-regulatory region binding"/>
    <property type="evidence" value="ECO:0000353"/>
    <property type="project" value="TAIR"/>
</dbReference>
<dbReference type="GO" id="GO:0006355">
    <property type="term" value="P:regulation of DNA-templated transcription"/>
    <property type="evidence" value="ECO:0000304"/>
    <property type="project" value="TAIR"/>
</dbReference>
<dbReference type="GO" id="GO:0009637">
    <property type="term" value="P:response to blue light"/>
    <property type="evidence" value="ECO:0000314"/>
    <property type="project" value="UniProtKB"/>
</dbReference>
<dbReference type="CDD" id="cd18919">
    <property type="entry name" value="bHLH_AtBPE_like"/>
    <property type="match status" value="1"/>
</dbReference>
<dbReference type="FunFam" id="4.10.280.10:FF:000002">
    <property type="entry name" value="Basic helix-loop-helix transcription factor"/>
    <property type="match status" value="1"/>
</dbReference>
<dbReference type="Gene3D" id="4.10.280.10">
    <property type="entry name" value="Helix-loop-helix DNA-binding domain"/>
    <property type="match status" value="1"/>
</dbReference>
<dbReference type="InterPro" id="IPR011598">
    <property type="entry name" value="bHLH_dom"/>
</dbReference>
<dbReference type="InterPro" id="IPR024097">
    <property type="entry name" value="bHLH_ZIP_TF"/>
</dbReference>
<dbReference type="InterPro" id="IPR036638">
    <property type="entry name" value="HLH_DNA-bd_sf"/>
</dbReference>
<dbReference type="PANTHER" id="PTHR12565">
    <property type="entry name" value="STEROL REGULATORY ELEMENT-BINDING PROTEIN"/>
    <property type="match status" value="1"/>
</dbReference>
<dbReference type="PANTHER" id="PTHR12565:SF312">
    <property type="entry name" value="TRANSCRIPTION FACTOR BHLH74"/>
    <property type="match status" value="1"/>
</dbReference>
<dbReference type="Pfam" id="PF00010">
    <property type="entry name" value="HLH"/>
    <property type="match status" value="1"/>
</dbReference>
<dbReference type="SMART" id="SM00353">
    <property type="entry name" value="HLH"/>
    <property type="match status" value="1"/>
</dbReference>
<dbReference type="SUPFAM" id="SSF47459">
    <property type="entry name" value="HLH, helix-loop-helix DNA-binding domain"/>
    <property type="match status" value="1"/>
</dbReference>
<dbReference type="PROSITE" id="PS50888">
    <property type="entry name" value="BHLH"/>
    <property type="match status" value="1"/>
</dbReference>
<organism>
    <name type="scientific">Arabidopsis thaliana</name>
    <name type="common">Mouse-ear cress</name>
    <dbReference type="NCBI Taxonomy" id="3702"/>
    <lineage>
        <taxon>Eukaryota</taxon>
        <taxon>Viridiplantae</taxon>
        <taxon>Streptophyta</taxon>
        <taxon>Embryophyta</taxon>
        <taxon>Tracheophyta</taxon>
        <taxon>Spermatophyta</taxon>
        <taxon>Magnoliopsida</taxon>
        <taxon>eudicotyledons</taxon>
        <taxon>Gunneridae</taxon>
        <taxon>Pentapetalae</taxon>
        <taxon>rosids</taxon>
        <taxon>malvids</taxon>
        <taxon>Brassicales</taxon>
        <taxon>Brassicaceae</taxon>
        <taxon>Camelineae</taxon>
        <taxon>Arabidopsis</taxon>
    </lineage>
</organism>
<gene>
    <name type="primary">BHLH74</name>
    <name type="synonym">ACE2</name>
    <name type="synonym">CIB4</name>
    <name type="synonym">EN90</name>
    <name type="ordered locus">At1g10120</name>
    <name type="ORF">T27I1.15</name>
</gene>
<reference key="1">
    <citation type="journal article" date="2000" name="Nature">
        <title>Sequence and analysis of chromosome 1 of the plant Arabidopsis thaliana.</title>
        <authorList>
            <person name="Theologis A."/>
            <person name="Ecker J.R."/>
            <person name="Palm C.J."/>
            <person name="Federspiel N.A."/>
            <person name="Kaul S."/>
            <person name="White O."/>
            <person name="Alonso J."/>
            <person name="Altafi H."/>
            <person name="Araujo R."/>
            <person name="Bowman C.L."/>
            <person name="Brooks S.Y."/>
            <person name="Buehler E."/>
            <person name="Chan A."/>
            <person name="Chao Q."/>
            <person name="Chen H."/>
            <person name="Cheuk R.F."/>
            <person name="Chin C.W."/>
            <person name="Chung M.K."/>
            <person name="Conn L."/>
            <person name="Conway A.B."/>
            <person name="Conway A.R."/>
            <person name="Creasy T.H."/>
            <person name="Dewar K."/>
            <person name="Dunn P."/>
            <person name="Etgu P."/>
            <person name="Feldblyum T.V."/>
            <person name="Feng J.-D."/>
            <person name="Fong B."/>
            <person name="Fujii C.Y."/>
            <person name="Gill J.E."/>
            <person name="Goldsmith A.D."/>
            <person name="Haas B."/>
            <person name="Hansen N.F."/>
            <person name="Hughes B."/>
            <person name="Huizar L."/>
            <person name="Hunter J.L."/>
            <person name="Jenkins J."/>
            <person name="Johnson-Hopson C."/>
            <person name="Khan S."/>
            <person name="Khaykin E."/>
            <person name="Kim C.J."/>
            <person name="Koo H.L."/>
            <person name="Kremenetskaia I."/>
            <person name="Kurtz D.B."/>
            <person name="Kwan A."/>
            <person name="Lam B."/>
            <person name="Langin-Hooper S."/>
            <person name="Lee A."/>
            <person name="Lee J.M."/>
            <person name="Lenz C.A."/>
            <person name="Li J.H."/>
            <person name="Li Y.-P."/>
            <person name="Lin X."/>
            <person name="Liu S.X."/>
            <person name="Liu Z.A."/>
            <person name="Luros J.S."/>
            <person name="Maiti R."/>
            <person name="Marziali A."/>
            <person name="Militscher J."/>
            <person name="Miranda M."/>
            <person name="Nguyen M."/>
            <person name="Nierman W.C."/>
            <person name="Osborne B.I."/>
            <person name="Pai G."/>
            <person name="Peterson J."/>
            <person name="Pham P.K."/>
            <person name="Rizzo M."/>
            <person name="Rooney T."/>
            <person name="Rowley D."/>
            <person name="Sakano H."/>
            <person name="Salzberg S.L."/>
            <person name="Schwartz J.R."/>
            <person name="Shinn P."/>
            <person name="Southwick A.M."/>
            <person name="Sun H."/>
            <person name="Tallon L.J."/>
            <person name="Tambunga G."/>
            <person name="Toriumi M.J."/>
            <person name="Town C.D."/>
            <person name="Utterback T."/>
            <person name="Van Aken S."/>
            <person name="Vaysberg M."/>
            <person name="Vysotskaia V.S."/>
            <person name="Walker M."/>
            <person name="Wu D."/>
            <person name="Yu G."/>
            <person name="Fraser C.M."/>
            <person name="Venter J.C."/>
            <person name="Davis R.W."/>
        </authorList>
    </citation>
    <scope>NUCLEOTIDE SEQUENCE [LARGE SCALE GENOMIC DNA]</scope>
    <source>
        <strain>cv. Columbia</strain>
    </source>
</reference>
<reference key="2">
    <citation type="journal article" date="2017" name="Plant J.">
        <title>Araport11: a complete reannotation of the Arabidopsis thaliana reference genome.</title>
        <authorList>
            <person name="Cheng C.Y."/>
            <person name="Krishnakumar V."/>
            <person name="Chan A.P."/>
            <person name="Thibaud-Nissen F."/>
            <person name="Schobel S."/>
            <person name="Town C.D."/>
        </authorList>
    </citation>
    <scope>GENOME REANNOTATION</scope>
    <source>
        <strain>cv. Columbia</strain>
    </source>
</reference>
<reference key="3">
    <citation type="submission" date="2004-05" db="EMBL/GenBank/DDBJ databases">
        <title>Arabidopsis ORF clones.</title>
        <authorList>
            <person name="Cheuk R.F."/>
            <person name="Chen H."/>
            <person name="Kim C.J."/>
            <person name="Shinn P."/>
            <person name="Carninci P."/>
            <person name="Hayashizaki Y."/>
            <person name="Ishida J."/>
            <person name="Kamiya A."/>
            <person name="Kawai J."/>
            <person name="Narusaka M."/>
            <person name="Sakurai T."/>
            <person name="Satou M."/>
            <person name="Seki M."/>
            <person name="Shinozaki K."/>
            <person name="Ecker J.R."/>
        </authorList>
    </citation>
    <scope>NUCLEOTIDE SEQUENCE [LARGE SCALE MRNA]</scope>
    <source>
        <strain>cv. Columbia</strain>
    </source>
</reference>
<reference key="4">
    <citation type="submission" date="2006-07" db="EMBL/GenBank/DDBJ databases">
        <title>Large-scale analysis of RIKEN Arabidopsis full-length (RAFL) cDNAs.</title>
        <authorList>
            <person name="Totoki Y."/>
            <person name="Seki M."/>
            <person name="Ishida J."/>
            <person name="Nakajima M."/>
            <person name="Enju A."/>
            <person name="Kamiya A."/>
            <person name="Narusaka M."/>
            <person name="Shin-i T."/>
            <person name="Nakagawa M."/>
            <person name="Sakamoto N."/>
            <person name="Oishi K."/>
            <person name="Kohara Y."/>
            <person name="Kobayashi M."/>
            <person name="Toyoda A."/>
            <person name="Sakaki Y."/>
            <person name="Sakurai T."/>
            <person name="Iida K."/>
            <person name="Akiyama K."/>
            <person name="Satou M."/>
            <person name="Toyoda T."/>
            <person name="Konagaya A."/>
            <person name="Carninci P."/>
            <person name="Kawai J."/>
            <person name="Hayashizaki Y."/>
            <person name="Shinozaki K."/>
        </authorList>
    </citation>
    <scope>NUCLEOTIDE SEQUENCE [LARGE SCALE MRNA]</scope>
    <source>
        <strain>cv. Columbia</strain>
    </source>
</reference>
<reference key="5">
    <citation type="journal article" date="2003" name="Mol. Biol. Evol.">
        <title>The basic helix-loop-helix transcription factor family in plants: a genome-wide study of protein structure and functional diversity.</title>
        <authorList>
            <person name="Heim M.A."/>
            <person name="Jakoby M."/>
            <person name="Werber M."/>
            <person name="Martin C."/>
            <person name="Weisshaar B."/>
            <person name="Bailey P.C."/>
        </authorList>
    </citation>
    <scope>NUCLEOTIDE SEQUENCE [MRNA] OF 227-366</scope>
    <scope>TISSUE SPECIFICITY</scope>
    <scope>GENE FAMILY</scope>
    <scope>NOMENCLATURE</scope>
    <source>
        <strain>cv. Columbia</strain>
    </source>
</reference>
<reference key="6">
    <citation type="journal article" date="2003" name="Plant Cell">
        <title>The Arabidopsis basic/helix-loop-helix transcription factor family.</title>
        <authorList>
            <person name="Toledo-Ortiz G."/>
            <person name="Huq E."/>
            <person name="Quail P.H."/>
        </authorList>
    </citation>
    <scope>GENE FAMILY</scope>
</reference>
<reference key="7">
    <citation type="journal article" date="2003" name="Plant Cell">
        <title>Update on the basic helix-loop-helix transcription factor gene family in Arabidopsis thaliana.</title>
        <authorList>
            <person name="Bailey P.C."/>
            <person name="Martin C."/>
            <person name="Toledo-Ortiz G."/>
            <person name="Quail P.H."/>
            <person name="Huq E."/>
            <person name="Heim M.A."/>
            <person name="Jakoby M."/>
            <person name="Werber M."/>
            <person name="Weisshaar B."/>
        </authorList>
    </citation>
    <scope>GENE FAMILY</scope>
    <scope>NOMENCLATURE</scope>
</reference>
<reference key="8">
    <citation type="journal article" date="2012" name="Plant Cell">
        <title>A triantagonistic basic helix-loop-helix system regulates cell elongation in Arabidopsis.</title>
        <authorList>
            <person name="Ikeda M."/>
            <person name="Fujiwara S."/>
            <person name="Mitsuda N."/>
            <person name="Ohme-Takagi M."/>
        </authorList>
    </citation>
    <scope>FUNCTION</scope>
    <scope>INTERACTION WITH IBH1</scope>
</reference>
<reference key="9">
    <citation type="journal article" date="2013" name="PLoS Genet.">
        <title>Multiple bHLH proteins form heterodimers to mediate CRY2-dependent regulation of flowering-time in Arabidopsis.</title>
        <authorList>
            <person name="Liu Y."/>
            <person name="Li X."/>
            <person name="Li K."/>
            <person name="Liu H."/>
            <person name="Lin C."/>
        </authorList>
    </citation>
    <scope>FUNCTION</scope>
    <scope>INTERACTION WITH CRY2</scope>
</reference>
<protein>
    <recommendedName>
        <fullName>Transcription factor bHLH74</fullName>
    </recommendedName>
    <alternativeName>
        <fullName>Basic helix-loop-helix protein 74</fullName>
        <shortName>AtbHLH74</shortName>
        <shortName>bHLH 74</shortName>
    </alternativeName>
    <alternativeName>
        <fullName>Protein ACTIVATOR FOR CELL ELONGATION 2</fullName>
    </alternativeName>
    <alternativeName>
        <fullName>Transcription factor EN 90</fullName>
    </alternativeName>
    <alternativeName>
        <fullName>bHLH transcription factor bHLH074</fullName>
    </alternativeName>
</protein>
<feature type="chain" id="PRO_0000358766" description="Transcription factor bHLH74">
    <location>
        <begin position="1"/>
        <end position="366"/>
    </location>
</feature>
<feature type="domain" description="bHLH" evidence="1">
    <location>
        <begin position="212"/>
        <end position="262"/>
    </location>
</feature>
<feature type="region of interest" description="Disordered" evidence="2">
    <location>
        <begin position="1"/>
        <end position="20"/>
    </location>
</feature>
<feature type="region of interest" description="Disordered" evidence="2">
    <location>
        <begin position="123"/>
        <end position="201"/>
    </location>
</feature>
<feature type="compositionally biased region" description="Gly residues" evidence="2">
    <location>
        <begin position="1"/>
        <end position="11"/>
    </location>
</feature>
<feature type="compositionally biased region" description="Basic and acidic residues" evidence="2">
    <location>
        <begin position="123"/>
        <end position="134"/>
    </location>
</feature>
<feature type="compositionally biased region" description="Basic and acidic residues" evidence="2">
    <location>
        <begin position="159"/>
        <end position="170"/>
    </location>
</feature>
<feature type="sequence conflict" description="In Ref. 4; BAF02146." evidence="6" ref="4">
    <original>V</original>
    <variation>A</variation>
    <location>
        <position position="239"/>
    </location>
</feature>
<sequence>MGGESNEGGEMGFKHGDDESGGISRVGITSMPLYAKADPFFSSADWDPVVNAAAAGFSSSHYHPSMAMDNPGMSCFSHYQPGSVSGFAADMPASLLPFGDCGGGQIGHFLGSDKKGERLIRAGESSHEDHHQVSDDAVLGASPVGKRRLPEAESQWNKKAVEEFQEDPQRGNDQSQKKHKNDQSKETVNKESSQSEEAPKENYIHMRARRGQATNSHSLAERVRREKISERMRLLQELVPGCNKITGKAVMLDEIINYVQSLQQQVEFLSMKLATVNPEINIDIDRILAKDLLQSRDRNTPTLGLNPFAGFQGNIPNLSATTNPQYNPLPQTTLESELQNLYQMGFVSNPSTMSSFSPNGRLKPEL</sequence>
<keyword id="KW-0238">DNA-binding</keyword>
<keyword id="KW-0341">Growth regulation</keyword>
<keyword id="KW-0539">Nucleus</keyword>
<keyword id="KW-1185">Reference proteome</keyword>
<keyword id="KW-0804">Transcription</keyword>
<keyword id="KW-0805">Transcription regulation</keyword>
<comment type="function">
    <text evidence="4 5">Transcriptional activator involved in cell elongation. Regulates the expression of a subset of genes involved in cell expansion by binding to the G-box motif. Binds to chromatin DNA of the FT gene and promotes its expression, and thus triggers flowering in response to blue light (PubMed:24130508).</text>
</comment>
<comment type="subunit">
    <text evidence="4 5 6">Homodimer (Probable). Interacts with IBH1. Binds reversibly to CRY2 after blue light illumination (PubMed:24130508).</text>
</comment>
<comment type="subcellular location">
    <subcellularLocation>
        <location evidence="1">Nucleus</location>
    </subcellularLocation>
</comment>
<comment type="tissue specificity">
    <text evidence="3">Expressed constitutively in roots, leaves, stems, and flowers.</text>
</comment>
<comment type="miscellaneous">
    <text evidence="7">Plants over-expressing BHLH74 show increased hypocotyl and cotyledon lengths.</text>
</comment>
<comment type="sequence caution" evidence="6">
    <conflict type="erroneous gene model prediction">
        <sequence resource="EMBL-CDS" id="AAC34336"/>
    </conflict>
</comment>
<evidence type="ECO:0000255" key="1">
    <source>
        <dbReference type="PROSITE-ProRule" id="PRU00981"/>
    </source>
</evidence>
<evidence type="ECO:0000256" key="2">
    <source>
        <dbReference type="SAM" id="MobiDB-lite"/>
    </source>
</evidence>
<evidence type="ECO:0000269" key="3">
    <source>
    </source>
</evidence>
<evidence type="ECO:0000269" key="4">
    <source>
    </source>
</evidence>
<evidence type="ECO:0000269" key="5">
    <source>
    </source>
</evidence>
<evidence type="ECO:0000305" key="6"/>
<evidence type="ECO:0000305" key="7">
    <source>
    </source>
</evidence>
<proteinExistence type="evidence at protein level"/>
<accession>Q6NKN9</accession>
<accession>O80604</accession>
<accession>Q0WL61</accession>
<accession>Q0WNX7</accession>
<name>BH074_ARATH</name>